<dbReference type="EMBL" id="BC111116">
    <property type="protein sequence ID" value="AAI11117.1"/>
    <property type="molecule type" value="mRNA"/>
</dbReference>
<dbReference type="RefSeq" id="NP_001033199.1">
    <property type="nucleotide sequence ID" value="NM_001038110.2"/>
</dbReference>
<dbReference type="SMR" id="Q2TA49"/>
<dbReference type="FunCoup" id="Q2TA49">
    <property type="interactions" value="1429"/>
</dbReference>
<dbReference type="IntAct" id="Q2TA49">
    <property type="interactions" value="1"/>
</dbReference>
<dbReference type="STRING" id="9913.ENSBTAP00000026119"/>
<dbReference type="PaxDb" id="9913-ENSBTAP00000026119"/>
<dbReference type="PeptideAtlas" id="Q2TA49"/>
<dbReference type="Ensembl" id="ENSBTAT00000026119.6">
    <property type="protein sequence ID" value="ENSBTAP00000026119.5"/>
    <property type="gene ID" value="ENSBTAG00000019604.7"/>
</dbReference>
<dbReference type="GeneID" id="514902"/>
<dbReference type="KEGG" id="bta:514902"/>
<dbReference type="CTD" id="7408"/>
<dbReference type="VEuPathDB" id="HostDB:ENSBTAG00000019604"/>
<dbReference type="VGNC" id="VGNC:36769">
    <property type="gene designation" value="VASP"/>
</dbReference>
<dbReference type="eggNOG" id="KOG4590">
    <property type="taxonomic scope" value="Eukaryota"/>
</dbReference>
<dbReference type="GeneTree" id="ENSGT00940000156765"/>
<dbReference type="HOGENOM" id="CLU_017790_0_0_1"/>
<dbReference type="InParanoid" id="Q2TA49"/>
<dbReference type="OMA" id="TSEAHPC"/>
<dbReference type="OrthoDB" id="31170at2759"/>
<dbReference type="TreeFam" id="TF321411"/>
<dbReference type="Proteomes" id="UP000009136">
    <property type="component" value="Chromosome 18"/>
</dbReference>
<dbReference type="Bgee" id="ENSBTAG00000019604">
    <property type="expression patterns" value="Expressed in neutrophil and 106 other cell types or tissues"/>
</dbReference>
<dbReference type="GO" id="GO:0005923">
    <property type="term" value="C:bicellular tight junction"/>
    <property type="evidence" value="ECO:0007669"/>
    <property type="project" value="UniProtKB-SubCell"/>
</dbReference>
<dbReference type="GO" id="GO:0005737">
    <property type="term" value="C:cytoplasm"/>
    <property type="evidence" value="ECO:0000318"/>
    <property type="project" value="GO_Central"/>
</dbReference>
<dbReference type="GO" id="GO:0005856">
    <property type="term" value="C:cytoskeleton"/>
    <property type="evidence" value="ECO:0007669"/>
    <property type="project" value="UniProtKB-SubCell"/>
</dbReference>
<dbReference type="GO" id="GO:0005829">
    <property type="term" value="C:cytosol"/>
    <property type="evidence" value="ECO:0007669"/>
    <property type="project" value="Ensembl"/>
</dbReference>
<dbReference type="GO" id="GO:0030425">
    <property type="term" value="C:dendrite"/>
    <property type="evidence" value="ECO:0000318"/>
    <property type="project" value="GO_Central"/>
</dbReference>
<dbReference type="GO" id="GO:0031527">
    <property type="term" value="C:filopodium membrane"/>
    <property type="evidence" value="ECO:0007669"/>
    <property type="project" value="UniProtKB-SubCell"/>
</dbReference>
<dbReference type="GO" id="GO:0005925">
    <property type="term" value="C:focal adhesion"/>
    <property type="evidence" value="ECO:0007669"/>
    <property type="project" value="UniProtKB-SubCell"/>
</dbReference>
<dbReference type="GO" id="GO:0031258">
    <property type="term" value="C:lamellipodium membrane"/>
    <property type="evidence" value="ECO:0007669"/>
    <property type="project" value="UniProtKB-SubCell"/>
</dbReference>
<dbReference type="GO" id="GO:0005886">
    <property type="term" value="C:plasma membrane"/>
    <property type="evidence" value="ECO:0000318"/>
    <property type="project" value="GO_Central"/>
</dbReference>
<dbReference type="GO" id="GO:0014069">
    <property type="term" value="C:postsynaptic density"/>
    <property type="evidence" value="ECO:0000318"/>
    <property type="project" value="GO_Central"/>
</dbReference>
<dbReference type="GO" id="GO:0003779">
    <property type="term" value="F:actin binding"/>
    <property type="evidence" value="ECO:0007669"/>
    <property type="project" value="UniProtKB-KW"/>
</dbReference>
<dbReference type="GO" id="GO:0035256">
    <property type="term" value="F:G protein-coupled glutamate receptor binding"/>
    <property type="evidence" value="ECO:0000318"/>
    <property type="project" value="GO_Central"/>
</dbReference>
<dbReference type="GO" id="GO:0005522">
    <property type="term" value="F:profilin binding"/>
    <property type="evidence" value="ECO:0007669"/>
    <property type="project" value="Ensembl"/>
</dbReference>
<dbReference type="GO" id="GO:0017124">
    <property type="term" value="F:SH3 domain binding"/>
    <property type="evidence" value="ECO:0007669"/>
    <property type="project" value="UniProtKB-KW"/>
</dbReference>
<dbReference type="GO" id="GO:0008154">
    <property type="term" value="P:actin polymerization or depolymerization"/>
    <property type="evidence" value="ECO:0007669"/>
    <property type="project" value="InterPro"/>
</dbReference>
<dbReference type="GO" id="GO:0007411">
    <property type="term" value="P:axon guidance"/>
    <property type="evidence" value="ECO:0007669"/>
    <property type="project" value="Ensembl"/>
</dbReference>
<dbReference type="GO" id="GO:0007216">
    <property type="term" value="P:G protein-coupled glutamate receptor signaling pathway"/>
    <property type="evidence" value="ECO:0000318"/>
    <property type="project" value="GO_Central"/>
</dbReference>
<dbReference type="GO" id="GO:0001843">
    <property type="term" value="P:neural tube closure"/>
    <property type="evidence" value="ECO:0007669"/>
    <property type="project" value="Ensembl"/>
</dbReference>
<dbReference type="GO" id="GO:0030838">
    <property type="term" value="P:positive regulation of actin filament polymerization"/>
    <property type="evidence" value="ECO:0007669"/>
    <property type="project" value="Ensembl"/>
</dbReference>
<dbReference type="GO" id="GO:0051289">
    <property type="term" value="P:protein homotetramerization"/>
    <property type="evidence" value="ECO:0007669"/>
    <property type="project" value="InterPro"/>
</dbReference>
<dbReference type="GO" id="GO:2001256">
    <property type="term" value="P:regulation of store-operated calcium entry"/>
    <property type="evidence" value="ECO:0000318"/>
    <property type="project" value="GO_Central"/>
</dbReference>
<dbReference type="CDD" id="cd01207">
    <property type="entry name" value="EVH1_Ena_VASP-like"/>
    <property type="match status" value="1"/>
</dbReference>
<dbReference type="CDD" id="cd22185">
    <property type="entry name" value="WH2_hVASP-like"/>
    <property type="match status" value="1"/>
</dbReference>
<dbReference type="FunFam" id="1.20.5.1160:FF:000005">
    <property type="entry name" value="vasodilator-stimulated phosphoprotein isoform X2"/>
    <property type="match status" value="1"/>
</dbReference>
<dbReference type="FunFam" id="2.30.29.30:FF:000047">
    <property type="entry name" value="vasodilator-stimulated phosphoprotein isoform X2"/>
    <property type="match status" value="1"/>
</dbReference>
<dbReference type="Gene3D" id="2.30.29.30">
    <property type="entry name" value="Pleckstrin-homology domain (PH domain)/Phosphotyrosine-binding domain (PTB)"/>
    <property type="match status" value="1"/>
</dbReference>
<dbReference type="Gene3D" id="1.20.5.1160">
    <property type="entry name" value="Vasodilator-stimulated phosphoprotein"/>
    <property type="match status" value="1"/>
</dbReference>
<dbReference type="InterPro" id="IPR011993">
    <property type="entry name" value="PH-like_dom_sf"/>
</dbReference>
<dbReference type="InterPro" id="IPR017354">
    <property type="entry name" value="VASP/EVL"/>
</dbReference>
<dbReference type="InterPro" id="IPR038023">
    <property type="entry name" value="VASP_sf"/>
</dbReference>
<dbReference type="InterPro" id="IPR014885">
    <property type="entry name" value="VASP_tetra"/>
</dbReference>
<dbReference type="InterPro" id="IPR000697">
    <property type="entry name" value="WH1/EVH1_dom"/>
</dbReference>
<dbReference type="PANTHER" id="PTHR11202">
    <property type="entry name" value="SPROUTY-RELATED, EVH1 DOMAIN-CONTAINING PROTEIN FAMILY MEMBER"/>
    <property type="match status" value="1"/>
</dbReference>
<dbReference type="PANTHER" id="PTHR11202:SF12">
    <property type="entry name" value="VASODILATOR-STIMULATED PHOSPHOPROTEIN"/>
    <property type="match status" value="1"/>
</dbReference>
<dbReference type="Pfam" id="PF08776">
    <property type="entry name" value="VASP_tetra"/>
    <property type="match status" value="1"/>
</dbReference>
<dbReference type="Pfam" id="PF00568">
    <property type="entry name" value="WH1"/>
    <property type="match status" value="1"/>
</dbReference>
<dbReference type="PIRSF" id="PIRSF038010">
    <property type="entry name" value="Vasodilator_Phospo"/>
    <property type="match status" value="1"/>
</dbReference>
<dbReference type="SMART" id="SM00461">
    <property type="entry name" value="WH1"/>
    <property type="match status" value="1"/>
</dbReference>
<dbReference type="SUPFAM" id="SSF50729">
    <property type="entry name" value="PH domain-like"/>
    <property type="match status" value="1"/>
</dbReference>
<dbReference type="SUPFAM" id="SSF118370">
    <property type="entry name" value="Vasodilator-stimulated phosphoprotein, VASP, tetramerisation domain"/>
    <property type="match status" value="1"/>
</dbReference>
<dbReference type="PROSITE" id="PS50229">
    <property type="entry name" value="WH1"/>
    <property type="match status" value="1"/>
</dbReference>
<sequence length="383" mass="40463">MSETVVCTSRATVMLYDDSNKRWLPAGTGPQAFSRVQIYHNPTANSFRVVGRKMQPDQQVVINCAIVRGVKYNQATPNFHQWRDARQVWGLNFGSKEDATQFANGMASALEALEGGGPLPPPPPTAPPTWSAQNGPSPEEMEQQKRQQQSELMERERRASNAGGPPAASAGAPPPPPGPPPPPGPPPPPGLSSSGVSAATQGAGGGPPPAPPLPTAQGPSGGGTGAPSLASAIAGAKLRKVSKQEEASAGPVAPKAESSRSTGGGLMEEMNAMLARRRKATQVGEKPAKDESANQEESDARVPAHSESVRRPWEKNSTTLPRMKSSSSVTTSEAHPATPSSSDESDLERVKQELLEEVRKELQKVKEEIIEAFVQELRKRGAP</sequence>
<feature type="initiator methionine" description="Removed" evidence="3">
    <location>
        <position position="1"/>
    </location>
</feature>
<feature type="chain" id="PRO_0000227759" description="Vasodilator-stimulated phosphoprotein">
    <location>
        <begin position="2"/>
        <end position="383"/>
    </location>
</feature>
<feature type="domain" description="WH1" evidence="6">
    <location>
        <begin position="2"/>
        <end position="113"/>
    </location>
</feature>
<feature type="repeat" description="1">
    <location>
        <begin position="347"/>
        <end position="361"/>
    </location>
</feature>
<feature type="repeat" description="2">
    <location>
        <begin position="362"/>
        <end position="376"/>
    </location>
</feature>
<feature type="region of interest" description="Disordered" evidence="7">
    <location>
        <begin position="112"/>
        <end position="349"/>
    </location>
</feature>
<feature type="region of interest" description="EVH2">
    <location>
        <begin position="228"/>
        <end position="380"/>
    </location>
</feature>
<feature type="region of interest" description="EVH2 block A">
    <location>
        <begin position="228"/>
        <end position="248"/>
    </location>
</feature>
<feature type="region of interest" description="EVH2 block B">
    <location>
        <begin position="262"/>
        <end position="281"/>
    </location>
</feature>
<feature type="region of interest" description="EVH2 block C">
    <location>
        <begin position="346"/>
        <end position="380"/>
    </location>
</feature>
<feature type="region of interest" description="2 X 15 AA tandem repeats of L-[EQ]-[KR] [MV]-K-[EQ]-E-[IL]-[IL]-E-[AEV]-[FV]-[KRV]-[KQ]-E">
    <location>
        <begin position="347"/>
        <end position="361"/>
    </location>
</feature>
<feature type="coiled-coil region" evidence="5">
    <location>
        <begin position="343"/>
        <end position="376"/>
    </location>
</feature>
<feature type="short sequence motif" description="KLKR">
    <location>
        <begin position="237"/>
        <end position="240"/>
    </location>
</feature>
<feature type="compositionally biased region" description="Pro residues" evidence="7">
    <location>
        <begin position="118"/>
        <end position="127"/>
    </location>
</feature>
<feature type="compositionally biased region" description="Low complexity" evidence="7">
    <location>
        <begin position="162"/>
        <end position="171"/>
    </location>
</feature>
<feature type="compositionally biased region" description="Pro residues" evidence="7">
    <location>
        <begin position="172"/>
        <end position="190"/>
    </location>
</feature>
<feature type="compositionally biased region" description="Low complexity" evidence="7">
    <location>
        <begin position="191"/>
        <end position="201"/>
    </location>
</feature>
<feature type="compositionally biased region" description="Basic and acidic residues" evidence="7">
    <location>
        <begin position="286"/>
        <end position="314"/>
    </location>
</feature>
<feature type="compositionally biased region" description="Polar residues" evidence="7">
    <location>
        <begin position="315"/>
        <end position="342"/>
    </location>
</feature>
<feature type="modified residue" description="N-acetylserine" evidence="3">
    <location>
        <position position="2"/>
    </location>
</feature>
<feature type="modified residue" description="Phosphotyrosine" evidence="3">
    <location>
        <position position="39"/>
    </location>
</feature>
<feature type="modified residue" description="Phosphoserine" evidence="3">
    <location>
        <position position="46"/>
    </location>
</feature>
<feature type="modified residue" description="Phosphoserine; by PKA, PKG/PRKG1, PKC and ROCK1" evidence="2">
    <location>
        <position position="160"/>
    </location>
</feature>
<feature type="modified residue" description="Phosphoserine; by PKA and PKG/PRKG1" evidence="3">
    <location>
        <position position="242"/>
    </location>
</feature>
<feature type="modified residue" description="Phosphothreonine; by PKA, PKG/PRKG1 and AMPK" evidence="3">
    <location>
        <position position="281"/>
    </location>
</feature>
<feature type="modified residue" description="N6-acetyllysine" evidence="3">
    <location>
        <position position="286"/>
    </location>
</feature>
<feature type="modified residue" description="Phosphoserine" evidence="3">
    <location>
        <position position="308"/>
    </location>
</feature>
<feature type="modified residue" description="Phosphoserine" evidence="3">
    <location>
        <position position="317"/>
    </location>
</feature>
<feature type="modified residue" description="Phosphothreonine" evidence="3">
    <location>
        <position position="319"/>
    </location>
</feature>
<feature type="modified residue" description="Phosphoserine; by AMPK" evidence="3">
    <location>
        <position position="325"/>
    </location>
</feature>
<feature type="modified residue" description="Phosphoserine" evidence="4">
    <location>
        <position position="326"/>
    </location>
</feature>
<feature type="modified residue" description="Phosphoserine" evidence="4">
    <location>
        <position position="328"/>
    </location>
</feature>
<accession>Q2TA49</accession>
<keyword id="KW-0007">Acetylation</keyword>
<keyword id="KW-0009">Actin-binding</keyword>
<keyword id="KW-0965">Cell junction</keyword>
<keyword id="KW-1003">Cell membrane</keyword>
<keyword id="KW-0966">Cell projection</keyword>
<keyword id="KW-0175">Coiled coil</keyword>
<keyword id="KW-0963">Cytoplasm</keyword>
<keyword id="KW-0206">Cytoskeleton</keyword>
<keyword id="KW-0472">Membrane</keyword>
<keyword id="KW-0597">Phosphoprotein</keyword>
<keyword id="KW-1185">Reference proteome</keyword>
<keyword id="KW-0677">Repeat</keyword>
<keyword id="KW-0729">SH3-binding</keyword>
<keyword id="KW-0796">Tight junction</keyword>
<name>VASP_BOVIN</name>
<proteinExistence type="evidence at transcript level"/>
<gene>
    <name type="primary">VASP</name>
</gene>
<organism>
    <name type="scientific">Bos taurus</name>
    <name type="common">Bovine</name>
    <dbReference type="NCBI Taxonomy" id="9913"/>
    <lineage>
        <taxon>Eukaryota</taxon>
        <taxon>Metazoa</taxon>
        <taxon>Chordata</taxon>
        <taxon>Craniata</taxon>
        <taxon>Vertebrata</taxon>
        <taxon>Euteleostomi</taxon>
        <taxon>Mammalia</taxon>
        <taxon>Eutheria</taxon>
        <taxon>Laurasiatheria</taxon>
        <taxon>Artiodactyla</taxon>
        <taxon>Ruminantia</taxon>
        <taxon>Pecora</taxon>
        <taxon>Bovidae</taxon>
        <taxon>Bovinae</taxon>
        <taxon>Bos</taxon>
    </lineage>
</organism>
<evidence type="ECO:0000250" key="1"/>
<evidence type="ECO:0000250" key="2">
    <source>
        <dbReference type="UniProtKB" id="P50551"/>
    </source>
</evidence>
<evidence type="ECO:0000250" key="3">
    <source>
        <dbReference type="UniProtKB" id="P50552"/>
    </source>
</evidence>
<evidence type="ECO:0000250" key="4">
    <source>
        <dbReference type="UniProtKB" id="P70460"/>
    </source>
</evidence>
<evidence type="ECO:0000255" key="5"/>
<evidence type="ECO:0000255" key="6">
    <source>
        <dbReference type="PROSITE-ProRule" id="PRU00410"/>
    </source>
</evidence>
<evidence type="ECO:0000256" key="7">
    <source>
        <dbReference type="SAM" id="MobiDB-lite"/>
    </source>
</evidence>
<evidence type="ECO:0000305" key="8"/>
<comment type="function">
    <text evidence="1">Ena/VASP proteins are actin-associated proteins involved in a range of processes dependent on cytoskeleton remodeling and cell polarity such as axon guidance, lamellipodial and filopodial dynamics, platelet activation and cell migration. VASP promotes actin filament elongation. It protects the barbed end of growing actin filaments against capping and increases the rate of actin polymerization in the presence of capping protein. VASP stimulates actin filament elongation by promoting the transfer of profilin-bound actin monomers onto the barbed end of growing actin filaments. Plays a role in actin-based mobility of Listeria monocytogenes in host cells. Regulates actin dynamics in platelets and plays an important role in regulating platelet aggregation (By similarity).</text>
</comment>
<comment type="subunit">
    <text evidence="1">Homotetramer. Interacts with PFN1, PFN2, LPP, ACTN1 and ACTG1. Interacts, via the EVH1 domain, with the Pro-rich regions of ZYX. This interaction is important for targeting to focal adhesions and the formation of actin-rich structures at the apical surface of cells. Interacts, via the EVH1 domain, with the Pro-rich domain of Listeria monocytogenes actA. Interacts with APBB1IP. Interacts, via the Pro-rich domain, with the C-terminal SH3 domain of DNMBP. Interacts weakly with MEFV (By similarity).</text>
</comment>
<comment type="subcellular location">
    <subcellularLocation>
        <location>Cytoplasm</location>
    </subcellularLocation>
    <subcellularLocation>
        <location evidence="1">Cytoplasm</location>
        <location evidence="1">Cytoskeleton</location>
    </subcellularLocation>
    <subcellularLocation>
        <location evidence="1">Cell junction</location>
        <location evidence="1">Focal adhesion</location>
    </subcellularLocation>
    <subcellularLocation>
        <location evidence="1">Cell junction</location>
        <location evidence="1">Tight junction</location>
    </subcellularLocation>
    <subcellularLocation>
        <location evidence="1">Cell projection</location>
        <location evidence="1">Lamellipodium membrane</location>
    </subcellularLocation>
    <subcellularLocation>
        <location evidence="1">Cell projection</location>
        <location evidence="1">Filopodium membrane</location>
    </subcellularLocation>
    <text evidence="1">Targeted to stress fibers and focal adhesions through interaction with a number of proteins including MRL family members. Localizes to the plasma membrane in protruding lamellipodia and filopodial tips. Stimulation by thrombin or PMA, also translocates VASP to focal adhesions. Localized along the sides of actin filaments throughout the peripheral cytoplasm under basal conditions. In pre-apoptotic cells, colocalizes with MEFV in large specks (pyroptosomes) (By similarity).</text>
</comment>
<comment type="domain">
    <text>The EVH2 domain is comprised of 3 regions. Block A is a thymosin-like domain required for G-actin binding. The KLKR motif within this block is essential for the G-actin binding and for actin polymerization. Block B is required for F-actin binding and subcellular location, and Block C for tetramerization.</text>
</comment>
<comment type="domain">
    <text evidence="1">The WH1 domain mediates interaction with XIRP1.</text>
</comment>
<comment type="PTM">
    <text evidence="1">Major substrate for cAMP-dependent (PKA) and cGMP-dependent protein kinase (PKG) in platelets. The preferred site for PKA is Ser-160, the preferred site for PKG/PRKG1, Ser-242. In ADP-activated platelets, phosphorylation by PKA or PKG on Ser-160 leads to fibrinogen receptor inhibition. Phosphorylation on Thr-281 requires prior phosphorylation on Ser-160 and Ser-242. In response to phorbol ester (PMA) stimulation, phosphorylated by PKC/PRKCA. In response to thrombin, phosphorylated by both PKC and ROCK1. Phosphorylation at Thr-281 by AMPK does not require prior phosphorylation at Ser-160 or Ser-242. Phosphorylation at Ser-160 by PKA is required for localization to the tight junctions in epithelial cells. Phosphorylation modulates F-actin binding, actin filament elongation and platelet activation. Phosphorylation at Ser-325 by AMPK also alters actin filament binding. Carbon monoxide (CO) promotes phosphorylation at Ser-160, while nitric oxide (NO) promotes phosphorylation at Ser-160, but also at Ser-242 (By similarity).</text>
</comment>
<comment type="similarity">
    <text evidence="8">Belongs to the Ena/VASP family.</text>
</comment>
<reference key="1">
    <citation type="submission" date="2005-12" db="EMBL/GenBank/DDBJ databases">
        <authorList>
            <consortium name="NIH - Mammalian Gene Collection (MGC) project"/>
        </authorList>
    </citation>
    <scope>NUCLEOTIDE SEQUENCE [LARGE SCALE MRNA]</scope>
    <source>
        <strain>Crossbred X Angus</strain>
        <tissue>Ileum</tissue>
    </source>
</reference>
<protein>
    <recommendedName>
        <fullName>Vasodilator-stimulated phosphoprotein</fullName>
        <shortName>VASP</shortName>
    </recommendedName>
</protein>